<feature type="chain" id="PRO_1000066568" description="Acyl carrier protein">
    <location>
        <begin position="1"/>
        <end position="78"/>
    </location>
</feature>
<feature type="domain" description="Carrier" evidence="2">
    <location>
        <begin position="2"/>
        <end position="77"/>
    </location>
</feature>
<feature type="modified residue" description="O-(pantetheine 4'-phosphoryl)serine" evidence="2">
    <location>
        <position position="37"/>
    </location>
</feature>
<dbReference type="EMBL" id="CP000708">
    <property type="protein sequence ID" value="ABQ60146.1"/>
    <property type="molecule type" value="Genomic_DNA"/>
</dbReference>
<dbReference type="RefSeq" id="WP_002963616.1">
    <property type="nucleotide sequence ID" value="NC_009505.1"/>
</dbReference>
<dbReference type="BMRB" id="A5VP30"/>
<dbReference type="SMR" id="A5VP30"/>
<dbReference type="KEGG" id="bov:BOV_0464"/>
<dbReference type="HOGENOM" id="CLU_108696_5_1_5"/>
<dbReference type="UniPathway" id="UPA00094"/>
<dbReference type="Proteomes" id="UP000006383">
    <property type="component" value="Chromosome I"/>
</dbReference>
<dbReference type="GO" id="GO:0005829">
    <property type="term" value="C:cytosol"/>
    <property type="evidence" value="ECO:0007669"/>
    <property type="project" value="TreeGrafter"/>
</dbReference>
<dbReference type="GO" id="GO:0016020">
    <property type="term" value="C:membrane"/>
    <property type="evidence" value="ECO:0007669"/>
    <property type="project" value="GOC"/>
</dbReference>
<dbReference type="GO" id="GO:0000035">
    <property type="term" value="F:acyl binding"/>
    <property type="evidence" value="ECO:0007669"/>
    <property type="project" value="TreeGrafter"/>
</dbReference>
<dbReference type="GO" id="GO:0000036">
    <property type="term" value="F:acyl carrier activity"/>
    <property type="evidence" value="ECO:0007669"/>
    <property type="project" value="UniProtKB-UniRule"/>
</dbReference>
<dbReference type="GO" id="GO:0031177">
    <property type="term" value="F:phosphopantetheine binding"/>
    <property type="evidence" value="ECO:0007669"/>
    <property type="project" value="InterPro"/>
</dbReference>
<dbReference type="GO" id="GO:0009245">
    <property type="term" value="P:lipid A biosynthetic process"/>
    <property type="evidence" value="ECO:0007669"/>
    <property type="project" value="TreeGrafter"/>
</dbReference>
<dbReference type="FunFam" id="1.10.1200.10:FF:000001">
    <property type="entry name" value="Acyl carrier protein"/>
    <property type="match status" value="1"/>
</dbReference>
<dbReference type="Gene3D" id="1.10.1200.10">
    <property type="entry name" value="ACP-like"/>
    <property type="match status" value="1"/>
</dbReference>
<dbReference type="HAMAP" id="MF_01217">
    <property type="entry name" value="Acyl_carrier"/>
    <property type="match status" value="1"/>
</dbReference>
<dbReference type="InterPro" id="IPR003231">
    <property type="entry name" value="ACP"/>
</dbReference>
<dbReference type="InterPro" id="IPR036736">
    <property type="entry name" value="ACP-like_sf"/>
</dbReference>
<dbReference type="InterPro" id="IPR020806">
    <property type="entry name" value="PKS_PP-bd"/>
</dbReference>
<dbReference type="InterPro" id="IPR009081">
    <property type="entry name" value="PP-bd_ACP"/>
</dbReference>
<dbReference type="InterPro" id="IPR006162">
    <property type="entry name" value="Ppantetheine_attach_site"/>
</dbReference>
<dbReference type="NCBIfam" id="TIGR00517">
    <property type="entry name" value="acyl_carrier"/>
    <property type="match status" value="1"/>
</dbReference>
<dbReference type="NCBIfam" id="NF002148">
    <property type="entry name" value="PRK00982.1-2"/>
    <property type="match status" value="1"/>
</dbReference>
<dbReference type="NCBIfam" id="NF002149">
    <property type="entry name" value="PRK00982.1-3"/>
    <property type="match status" value="1"/>
</dbReference>
<dbReference type="NCBIfam" id="NF002150">
    <property type="entry name" value="PRK00982.1-4"/>
    <property type="match status" value="1"/>
</dbReference>
<dbReference type="NCBIfam" id="NF002151">
    <property type="entry name" value="PRK00982.1-5"/>
    <property type="match status" value="1"/>
</dbReference>
<dbReference type="PANTHER" id="PTHR20863">
    <property type="entry name" value="ACYL CARRIER PROTEIN"/>
    <property type="match status" value="1"/>
</dbReference>
<dbReference type="PANTHER" id="PTHR20863:SF76">
    <property type="entry name" value="CARRIER DOMAIN-CONTAINING PROTEIN"/>
    <property type="match status" value="1"/>
</dbReference>
<dbReference type="Pfam" id="PF00550">
    <property type="entry name" value="PP-binding"/>
    <property type="match status" value="1"/>
</dbReference>
<dbReference type="SMART" id="SM00823">
    <property type="entry name" value="PKS_PP"/>
    <property type="match status" value="1"/>
</dbReference>
<dbReference type="SUPFAM" id="SSF47336">
    <property type="entry name" value="ACP-like"/>
    <property type="match status" value="1"/>
</dbReference>
<dbReference type="PROSITE" id="PS50075">
    <property type="entry name" value="CARRIER"/>
    <property type="match status" value="1"/>
</dbReference>
<dbReference type="PROSITE" id="PS00012">
    <property type="entry name" value="PHOSPHOPANTETHEINE"/>
    <property type="match status" value="1"/>
</dbReference>
<name>ACP_BRUO2</name>
<sequence length="78" mass="8301">MSDTAERVKKIVVEHLGVDADKVTEGASFIDDLGADSLDTVELVMAFEEEFGVEIPDDAAETILTVGDAVKFIDKASA</sequence>
<keyword id="KW-0963">Cytoplasm</keyword>
<keyword id="KW-0275">Fatty acid biosynthesis</keyword>
<keyword id="KW-0276">Fatty acid metabolism</keyword>
<keyword id="KW-0444">Lipid biosynthesis</keyword>
<keyword id="KW-0443">Lipid metabolism</keyword>
<keyword id="KW-0596">Phosphopantetheine</keyword>
<keyword id="KW-0597">Phosphoprotein</keyword>
<reference key="1">
    <citation type="journal article" date="2009" name="PLoS ONE">
        <title>Genome degradation in Brucella ovis corresponds with narrowing of its host range and tissue tropism.</title>
        <authorList>
            <person name="Tsolis R.M."/>
            <person name="Seshadri R."/>
            <person name="Santos R.L."/>
            <person name="Sangari F.J."/>
            <person name="Lobo J.M."/>
            <person name="de Jong M.F."/>
            <person name="Ren Q."/>
            <person name="Myers G."/>
            <person name="Brinkac L.M."/>
            <person name="Nelson W.C."/>
            <person name="Deboy R.T."/>
            <person name="Angiuoli S."/>
            <person name="Khouri H."/>
            <person name="Dimitrov G."/>
            <person name="Robinson J.R."/>
            <person name="Mulligan S."/>
            <person name="Walker R.L."/>
            <person name="Elzer P.E."/>
            <person name="Hassan K.A."/>
            <person name="Paulsen I.T."/>
        </authorList>
    </citation>
    <scope>NUCLEOTIDE SEQUENCE [LARGE SCALE GENOMIC DNA]</scope>
    <source>
        <strain>ATCC 25840 / 63/290 / NCTC 10512</strain>
    </source>
</reference>
<evidence type="ECO:0000255" key="1">
    <source>
        <dbReference type="HAMAP-Rule" id="MF_01217"/>
    </source>
</evidence>
<evidence type="ECO:0000255" key="2">
    <source>
        <dbReference type="PROSITE-ProRule" id="PRU00258"/>
    </source>
</evidence>
<gene>
    <name evidence="1" type="primary">acpP</name>
    <name type="ordered locus">BOV_0464</name>
</gene>
<accession>A5VP30</accession>
<protein>
    <recommendedName>
        <fullName evidence="1">Acyl carrier protein</fullName>
        <shortName evidence="1">ACP</shortName>
    </recommendedName>
</protein>
<comment type="function">
    <text evidence="1">Carrier of the growing fatty acid chain in fatty acid biosynthesis.</text>
</comment>
<comment type="pathway">
    <text evidence="1">Lipid metabolism; fatty acid biosynthesis.</text>
</comment>
<comment type="subcellular location">
    <subcellularLocation>
        <location evidence="1">Cytoplasm</location>
    </subcellularLocation>
</comment>
<comment type="PTM">
    <text evidence="1">4'-phosphopantetheine is transferred from CoA to a specific serine of apo-ACP by AcpS. This modification is essential for activity because fatty acids are bound in thioester linkage to the sulfhydryl of the prosthetic group.</text>
</comment>
<comment type="similarity">
    <text evidence="1">Belongs to the acyl carrier protein (ACP) family.</text>
</comment>
<proteinExistence type="inferred from homology"/>
<organism>
    <name type="scientific">Brucella ovis (strain ATCC 25840 / 63/290 / NCTC 10512)</name>
    <dbReference type="NCBI Taxonomy" id="444178"/>
    <lineage>
        <taxon>Bacteria</taxon>
        <taxon>Pseudomonadati</taxon>
        <taxon>Pseudomonadota</taxon>
        <taxon>Alphaproteobacteria</taxon>
        <taxon>Hyphomicrobiales</taxon>
        <taxon>Brucellaceae</taxon>
        <taxon>Brucella/Ochrobactrum group</taxon>
        <taxon>Brucella</taxon>
    </lineage>
</organism>